<evidence type="ECO:0000250" key="1"/>
<evidence type="ECO:0000255" key="2"/>
<evidence type="ECO:0000305" key="3"/>
<name>NU2M_PELSU</name>
<organism>
    <name type="scientific">Pelomedusa subrufa</name>
    <name type="common">African side-necked turtle</name>
    <dbReference type="NCBI Taxonomy" id="44522"/>
    <lineage>
        <taxon>Eukaryota</taxon>
        <taxon>Metazoa</taxon>
        <taxon>Chordata</taxon>
        <taxon>Craniata</taxon>
        <taxon>Vertebrata</taxon>
        <taxon>Euteleostomi</taxon>
        <taxon>Archelosauria</taxon>
        <taxon>Testudinata</taxon>
        <taxon>Testudines</taxon>
        <taxon>Pleurodira</taxon>
        <taxon>Pelomedusidae</taxon>
        <taxon>Pelomedusa</taxon>
    </lineage>
</organism>
<feature type="chain" id="PRO_0000117622" description="NADH-ubiquinone oxidoreductase chain 2">
    <location>
        <begin position="1"/>
        <end position="346"/>
    </location>
</feature>
<feature type="transmembrane region" description="Helical" evidence="2">
    <location>
        <begin position="7"/>
        <end position="27"/>
    </location>
</feature>
<feature type="transmembrane region" description="Helical" evidence="2">
    <location>
        <begin position="59"/>
        <end position="79"/>
    </location>
</feature>
<feature type="transmembrane region" description="Helical" evidence="2">
    <location>
        <begin position="93"/>
        <end position="115"/>
    </location>
</feature>
<feature type="transmembrane region" description="Helical" evidence="2">
    <location>
        <begin position="151"/>
        <end position="171"/>
    </location>
</feature>
<feature type="transmembrane region" description="Helical" evidence="2">
    <location>
        <begin position="178"/>
        <end position="198"/>
    </location>
</feature>
<feature type="transmembrane region" description="Helical" evidence="2">
    <location>
        <begin position="200"/>
        <end position="220"/>
    </location>
</feature>
<feature type="transmembrane region" description="Helical" evidence="2">
    <location>
        <begin position="242"/>
        <end position="262"/>
    </location>
</feature>
<feature type="transmembrane region" description="Helical" evidence="2">
    <location>
        <begin position="275"/>
        <end position="294"/>
    </location>
</feature>
<feature type="transmembrane region" description="Helical" evidence="2">
    <location>
        <begin position="325"/>
        <end position="345"/>
    </location>
</feature>
<geneLocation type="mitochondrion"/>
<gene>
    <name type="primary">MT-ND2</name>
    <name type="synonym">MTND2</name>
    <name type="synonym">NADH2</name>
    <name type="synonym">ND2</name>
</gene>
<reference key="1">
    <citation type="journal article" date="1998" name="Proc. Natl. Acad. Sci. U.S.A.">
        <title>Complete mitochondrial genome suggests diapsid affinities of turtles.</title>
        <authorList>
            <person name="Zardoya R."/>
            <person name="Meyer A."/>
        </authorList>
    </citation>
    <scope>NUCLEOTIDE SEQUENCE [GENOMIC DNA]</scope>
</reference>
<sequence>MNPYVRAIITSGLILGPIITMSSNHWITAWCGLEMNSLTMIPLIANKYQPRAIEASTKYFLTQAMASYLMLSAALMNMWYYGQWDMQLLTDNISCTTMTVAMSIKLAAAPFHFWFPEVLQGATVLTALLLTTWQKLAPLTILVQCSQNLDTTLLIALGMTSILIGGWGGLNQTQIRKIMAFSSIAHLGWMYAILTLSPKILLLTFYLYVAMTATTFLMINVLQTNNMSAIMISWTKTPFMNTMMLLNLMSLAGLPPLTGFAPKWLILQEFTKQRLSMFASMMITSSLLSLYFYLRMSYYTIITLPPTTCNYPLQWRLMTNIHTALATITPLATALMPLLPTLKAIP</sequence>
<accession>O79671</accession>
<protein>
    <recommendedName>
        <fullName>NADH-ubiquinone oxidoreductase chain 2</fullName>
        <ecNumber>7.1.1.2</ecNumber>
    </recommendedName>
    <alternativeName>
        <fullName>NADH dehydrogenase subunit 2</fullName>
    </alternativeName>
</protein>
<keyword id="KW-0249">Electron transport</keyword>
<keyword id="KW-0472">Membrane</keyword>
<keyword id="KW-0496">Mitochondrion</keyword>
<keyword id="KW-0999">Mitochondrion inner membrane</keyword>
<keyword id="KW-0520">NAD</keyword>
<keyword id="KW-0679">Respiratory chain</keyword>
<keyword id="KW-1278">Translocase</keyword>
<keyword id="KW-0812">Transmembrane</keyword>
<keyword id="KW-1133">Transmembrane helix</keyword>
<keyword id="KW-0813">Transport</keyword>
<keyword id="KW-0830">Ubiquinone</keyword>
<proteinExistence type="inferred from homology"/>
<comment type="function">
    <text evidence="1">Core subunit of the mitochondrial membrane respiratory chain NADH dehydrogenase (Complex I) that is believed to belong to the minimal assembly required for catalysis. Complex I functions in the transfer of electrons from NADH to the respiratory chain. The immediate electron acceptor for the enzyme is believed to be ubiquinone (By similarity).</text>
</comment>
<comment type="catalytic activity">
    <reaction>
        <text>a ubiquinone + NADH + 5 H(+)(in) = a ubiquinol + NAD(+) + 4 H(+)(out)</text>
        <dbReference type="Rhea" id="RHEA:29091"/>
        <dbReference type="Rhea" id="RHEA-COMP:9565"/>
        <dbReference type="Rhea" id="RHEA-COMP:9566"/>
        <dbReference type="ChEBI" id="CHEBI:15378"/>
        <dbReference type="ChEBI" id="CHEBI:16389"/>
        <dbReference type="ChEBI" id="CHEBI:17976"/>
        <dbReference type="ChEBI" id="CHEBI:57540"/>
        <dbReference type="ChEBI" id="CHEBI:57945"/>
        <dbReference type="EC" id="7.1.1.2"/>
    </reaction>
</comment>
<comment type="subcellular location">
    <subcellularLocation>
        <location>Mitochondrion inner membrane</location>
        <topology>Multi-pass membrane protein</topology>
    </subcellularLocation>
</comment>
<comment type="similarity">
    <text evidence="3">Belongs to the complex I subunit 2 family.</text>
</comment>
<dbReference type="EC" id="7.1.1.2"/>
<dbReference type="EMBL" id="AF039066">
    <property type="protein sequence ID" value="AAD05051.1"/>
    <property type="molecule type" value="Genomic_DNA"/>
</dbReference>
<dbReference type="PIR" id="T11102">
    <property type="entry name" value="T11102"/>
</dbReference>
<dbReference type="RefSeq" id="NP_008433.1">
    <property type="nucleotide sequence ID" value="NC_001947.1"/>
</dbReference>
<dbReference type="SMR" id="O79671"/>
<dbReference type="GeneID" id="808284"/>
<dbReference type="CTD" id="4536"/>
<dbReference type="GO" id="GO:0005743">
    <property type="term" value="C:mitochondrial inner membrane"/>
    <property type="evidence" value="ECO:0007669"/>
    <property type="project" value="UniProtKB-SubCell"/>
</dbReference>
<dbReference type="GO" id="GO:0008137">
    <property type="term" value="F:NADH dehydrogenase (ubiquinone) activity"/>
    <property type="evidence" value="ECO:0007669"/>
    <property type="project" value="UniProtKB-EC"/>
</dbReference>
<dbReference type="GO" id="GO:0006120">
    <property type="term" value="P:mitochondrial electron transport, NADH to ubiquinone"/>
    <property type="evidence" value="ECO:0007669"/>
    <property type="project" value="InterPro"/>
</dbReference>
<dbReference type="InterPro" id="IPR050175">
    <property type="entry name" value="Complex_I_Subunit_2"/>
</dbReference>
<dbReference type="InterPro" id="IPR010933">
    <property type="entry name" value="NADH_DH_su2_C"/>
</dbReference>
<dbReference type="InterPro" id="IPR003917">
    <property type="entry name" value="NADH_UbQ_OxRdtase_chain2"/>
</dbReference>
<dbReference type="InterPro" id="IPR001750">
    <property type="entry name" value="ND/Mrp_TM"/>
</dbReference>
<dbReference type="PANTHER" id="PTHR46552">
    <property type="entry name" value="NADH-UBIQUINONE OXIDOREDUCTASE CHAIN 2"/>
    <property type="match status" value="1"/>
</dbReference>
<dbReference type="PANTHER" id="PTHR46552:SF1">
    <property type="entry name" value="NADH-UBIQUINONE OXIDOREDUCTASE CHAIN 2"/>
    <property type="match status" value="1"/>
</dbReference>
<dbReference type="Pfam" id="PF06444">
    <property type="entry name" value="NADH_dehy_S2_C"/>
    <property type="match status" value="1"/>
</dbReference>
<dbReference type="Pfam" id="PF00361">
    <property type="entry name" value="Proton_antipo_M"/>
    <property type="match status" value="1"/>
</dbReference>
<dbReference type="PRINTS" id="PR01436">
    <property type="entry name" value="NADHDHGNASE2"/>
</dbReference>